<protein>
    <recommendedName>
        <fullName evidence="3">Large ribosomal subunit protein eL37</fullName>
    </recommendedName>
    <alternativeName>
        <fullName>60S ribosomal protein L37</fullName>
    </alternativeName>
</protein>
<proteinExistence type="inferred from homology"/>
<sequence>MTKGTSSFGKRRNKTHTLCRRCGRSSYHIQKSKCAQCGYPAAKLRSYHWSVKAKRRKTTGTGRMRHLKIVRRRFRNGFKEGKPTPKKAVASS</sequence>
<dbReference type="EMBL" id="AF400199">
    <property type="protein sequence ID" value="AAK92171.1"/>
    <property type="molecule type" value="mRNA"/>
</dbReference>
<dbReference type="SMR" id="Q962S7"/>
<dbReference type="EnsemblMetazoa" id="XM_035573158.2">
    <property type="protein sequence ID" value="XP_035429051.1"/>
    <property type="gene ID" value="LOC118262055"/>
</dbReference>
<dbReference type="OrthoDB" id="10259236at2759"/>
<dbReference type="Proteomes" id="UP000829999">
    <property type="component" value="Unplaced"/>
</dbReference>
<dbReference type="GO" id="GO:0022625">
    <property type="term" value="C:cytosolic large ribosomal subunit"/>
    <property type="evidence" value="ECO:0007669"/>
    <property type="project" value="TreeGrafter"/>
</dbReference>
<dbReference type="GO" id="GO:0019843">
    <property type="term" value="F:rRNA binding"/>
    <property type="evidence" value="ECO:0007669"/>
    <property type="project" value="UniProtKB-KW"/>
</dbReference>
<dbReference type="GO" id="GO:0003735">
    <property type="term" value="F:structural constituent of ribosome"/>
    <property type="evidence" value="ECO:0007669"/>
    <property type="project" value="InterPro"/>
</dbReference>
<dbReference type="GO" id="GO:0008270">
    <property type="term" value="F:zinc ion binding"/>
    <property type="evidence" value="ECO:0007669"/>
    <property type="project" value="UniProtKB-KW"/>
</dbReference>
<dbReference type="GO" id="GO:0006412">
    <property type="term" value="P:translation"/>
    <property type="evidence" value="ECO:0007669"/>
    <property type="project" value="InterPro"/>
</dbReference>
<dbReference type="FunFam" id="2.20.25.30:FF:000001">
    <property type="entry name" value="Ribosomal protein L37"/>
    <property type="match status" value="1"/>
</dbReference>
<dbReference type="Gene3D" id="2.20.25.30">
    <property type="match status" value="1"/>
</dbReference>
<dbReference type="HAMAP" id="MF_00547">
    <property type="entry name" value="Ribosomal_eL37"/>
    <property type="match status" value="1"/>
</dbReference>
<dbReference type="InterPro" id="IPR001569">
    <property type="entry name" value="Ribosomal_eL37"/>
</dbReference>
<dbReference type="InterPro" id="IPR011331">
    <property type="entry name" value="Ribosomal_eL37/eL43"/>
</dbReference>
<dbReference type="InterPro" id="IPR018267">
    <property type="entry name" value="Ribosomal_eL37_CS"/>
</dbReference>
<dbReference type="InterPro" id="IPR011332">
    <property type="entry name" value="Ribosomal_zn-bd"/>
</dbReference>
<dbReference type="NCBIfam" id="NF003214">
    <property type="entry name" value="PRK04179.1"/>
    <property type="match status" value="1"/>
</dbReference>
<dbReference type="PANTHER" id="PTHR10768">
    <property type="entry name" value="60S RIBOSOMAL PROTEIN L37"/>
    <property type="match status" value="1"/>
</dbReference>
<dbReference type="PANTHER" id="PTHR10768:SF0">
    <property type="entry name" value="RIBOSOMAL PROTEIN L37"/>
    <property type="match status" value="1"/>
</dbReference>
<dbReference type="Pfam" id="PF01907">
    <property type="entry name" value="Ribosomal_L37e"/>
    <property type="match status" value="1"/>
</dbReference>
<dbReference type="SUPFAM" id="SSF57829">
    <property type="entry name" value="Zn-binding ribosomal proteins"/>
    <property type="match status" value="1"/>
</dbReference>
<dbReference type="PROSITE" id="PS01077">
    <property type="entry name" value="RIBOSOMAL_L37E"/>
    <property type="match status" value="1"/>
</dbReference>
<feature type="initiator methionine" description="Removed" evidence="1">
    <location>
        <position position="1"/>
    </location>
</feature>
<feature type="chain" id="PRO_0000139715" description="Large ribosomal subunit protein eL37">
    <location>
        <begin position="2"/>
        <end position="92"/>
    </location>
</feature>
<feature type="zinc finger region" description="C4-type" evidence="2">
    <location>
        <begin position="19"/>
        <end position="37"/>
    </location>
</feature>
<feature type="binding site" evidence="1">
    <location>
        <position position="19"/>
    </location>
    <ligand>
        <name>Zn(2+)</name>
        <dbReference type="ChEBI" id="CHEBI:29105"/>
    </ligand>
</feature>
<feature type="binding site" evidence="1">
    <location>
        <position position="22"/>
    </location>
    <ligand>
        <name>Zn(2+)</name>
        <dbReference type="ChEBI" id="CHEBI:29105"/>
    </ligand>
</feature>
<feature type="binding site" evidence="1">
    <location>
        <position position="34"/>
    </location>
    <ligand>
        <name>Zn(2+)</name>
        <dbReference type="ChEBI" id="CHEBI:29105"/>
    </ligand>
</feature>
<feature type="binding site" evidence="1">
    <location>
        <position position="37"/>
    </location>
    <ligand>
        <name>Zn(2+)</name>
        <dbReference type="ChEBI" id="CHEBI:29105"/>
    </ligand>
</feature>
<evidence type="ECO:0000250" key="1"/>
<evidence type="ECO:0000255" key="2"/>
<evidence type="ECO:0000305" key="3"/>
<name>RL37_SPOFR</name>
<reference key="1">
    <citation type="journal article" date="2003" name="Bioinformatics">
        <title>Annotation pattern of ESTs from Spodoptera frugiperda Sf9 cells and analysis of the ribosomal protein genes reveal insect-specific features and unexpectedly low codon usage bias.</title>
        <authorList>
            <person name="Landais I."/>
            <person name="Ogliastro M."/>
            <person name="Mita K."/>
            <person name="Nohata J."/>
            <person name="Lopez-Ferber M."/>
            <person name="Duonor-Cerutti M."/>
            <person name="Shimada T."/>
            <person name="Fournier P."/>
            <person name="Devauchelle G."/>
        </authorList>
    </citation>
    <scope>NUCLEOTIDE SEQUENCE [LARGE SCALE MRNA]</scope>
</reference>
<keyword id="KW-0479">Metal-binding</keyword>
<keyword id="KW-0687">Ribonucleoprotein</keyword>
<keyword id="KW-0689">Ribosomal protein</keyword>
<keyword id="KW-0694">RNA-binding</keyword>
<keyword id="KW-0699">rRNA-binding</keyword>
<keyword id="KW-0862">Zinc</keyword>
<keyword id="KW-0863">Zinc-finger</keyword>
<comment type="function">
    <text evidence="1">Binds to the 23S rRNA.</text>
</comment>
<comment type="cofactor">
    <cofactor evidence="1">
        <name>Zn(2+)</name>
        <dbReference type="ChEBI" id="CHEBI:29105"/>
    </cofactor>
    <text evidence="1">Binds 1 zinc ion per subunit.</text>
</comment>
<comment type="similarity">
    <text evidence="3">Belongs to the eukaryotic ribosomal protein eL37 family.</text>
</comment>
<gene>
    <name type="primary">RpL37</name>
</gene>
<organism>
    <name type="scientific">Spodoptera frugiperda</name>
    <name type="common">Fall armyworm</name>
    <dbReference type="NCBI Taxonomy" id="7108"/>
    <lineage>
        <taxon>Eukaryota</taxon>
        <taxon>Metazoa</taxon>
        <taxon>Ecdysozoa</taxon>
        <taxon>Arthropoda</taxon>
        <taxon>Hexapoda</taxon>
        <taxon>Insecta</taxon>
        <taxon>Pterygota</taxon>
        <taxon>Neoptera</taxon>
        <taxon>Endopterygota</taxon>
        <taxon>Lepidoptera</taxon>
        <taxon>Glossata</taxon>
        <taxon>Ditrysia</taxon>
        <taxon>Noctuoidea</taxon>
        <taxon>Noctuidae</taxon>
        <taxon>Amphipyrinae</taxon>
        <taxon>Spodoptera</taxon>
    </lineage>
</organism>
<accession>Q962S7</accession>